<evidence type="ECO:0000255" key="1">
    <source>
        <dbReference type="HAMAP-Rule" id="MF_00160"/>
    </source>
</evidence>
<accession>Q3ILA3</accession>
<sequence length="360" mass="39811">MSKYNFCAGPAMLPPAVMKKAQQEFIDWQGLGVSVMEMSHRSKEFLALTKKCEASLRRLMNISDEFEVLFMHGGGRGQFSAVPLNLHQENKSAVYCENGVWSKSATDEANKFTQTTAIDVRNDTDGQFSIKAVADWQLPADASYIHYCPNETVDGLEIFDVPSHPTAPIIADMSSTILSREIDVNQFDLIYAGAQKNIGPSGIAIVIVRKTLLAREGLPKPGILDYALEAKQGSMFNTPPTFAWYLAAEVFQWLEQNGGVKAMEAQNIAKAELLYNFIDNSDFYSNKVAKHSRSRMNVPFWLNDESLNSKFVAQSNEAGLLALEGHRIVGGMRASIYNAMPLEGVQALVDFMAAFAKENS</sequence>
<gene>
    <name evidence="1" type="primary">serC</name>
    <name type="ordered locus">PSHAa1422</name>
</gene>
<reference key="1">
    <citation type="journal article" date="2005" name="Genome Res.">
        <title>Coping with cold: the genome of the versatile marine Antarctica bacterium Pseudoalteromonas haloplanktis TAC125.</title>
        <authorList>
            <person name="Medigue C."/>
            <person name="Krin E."/>
            <person name="Pascal G."/>
            <person name="Barbe V."/>
            <person name="Bernsel A."/>
            <person name="Bertin P.N."/>
            <person name="Cheung F."/>
            <person name="Cruveiller S."/>
            <person name="D'Amico S."/>
            <person name="Duilio A."/>
            <person name="Fang G."/>
            <person name="Feller G."/>
            <person name="Ho C."/>
            <person name="Mangenot S."/>
            <person name="Marino G."/>
            <person name="Nilsson J."/>
            <person name="Parrilli E."/>
            <person name="Rocha E.P.C."/>
            <person name="Rouy Z."/>
            <person name="Sekowska A."/>
            <person name="Tutino M.L."/>
            <person name="Vallenet D."/>
            <person name="von Heijne G."/>
            <person name="Danchin A."/>
        </authorList>
    </citation>
    <scope>NUCLEOTIDE SEQUENCE [LARGE SCALE GENOMIC DNA]</scope>
    <source>
        <strain>TAC 125</strain>
    </source>
</reference>
<comment type="function">
    <text evidence="1">Catalyzes the reversible conversion of 3-phosphohydroxypyruvate to phosphoserine and of 3-hydroxy-2-oxo-4-phosphonooxybutanoate to phosphohydroxythreonine.</text>
</comment>
<comment type="catalytic activity">
    <reaction evidence="1">
        <text>O-phospho-L-serine + 2-oxoglutarate = 3-phosphooxypyruvate + L-glutamate</text>
        <dbReference type="Rhea" id="RHEA:14329"/>
        <dbReference type="ChEBI" id="CHEBI:16810"/>
        <dbReference type="ChEBI" id="CHEBI:18110"/>
        <dbReference type="ChEBI" id="CHEBI:29985"/>
        <dbReference type="ChEBI" id="CHEBI:57524"/>
        <dbReference type="EC" id="2.6.1.52"/>
    </reaction>
</comment>
<comment type="catalytic activity">
    <reaction evidence="1">
        <text>4-(phosphooxy)-L-threonine + 2-oxoglutarate = (R)-3-hydroxy-2-oxo-4-phosphooxybutanoate + L-glutamate</text>
        <dbReference type="Rhea" id="RHEA:16573"/>
        <dbReference type="ChEBI" id="CHEBI:16810"/>
        <dbReference type="ChEBI" id="CHEBI:29985"/>
        <dbReference type="ChEBI" id="CHEBI:58452"/>
        <dbReference type="ChEBI" id="CHEBI:58538"/>
        <dbReference type="EC" id="2.6.1.52"/>
    </reaction>
</comment>
<comment type="cofactor">
    <cofactor evidence="1">
        <name>pyridoxal 5'-phosphate</name>
        <dbReference type="ChEBI" id="CHEBI:597326"/>
    </cofactor>
    <text evidence="1">Binds 1 pyridoxal phosphate per subunit.</text>
</comment>
<comment type="pathway">
    <text evidence="1">Amino-acid biosynthesis; L-serine biosynthesis; L-serine from 3-phospho-D-glycerate: step 2/3.</text>
</comment>
<comment type="pathway">
    <text evidence="1">Cofactor biosynthesis; pyridoxine 5'-phosphate biosynthesis; pyridoxine 5'-phosphate from D-erythrose 4-phosphate: step 3/5.</text>
</comment>
<comment type="subunit">
    <text evidence="1">Homodimer.</text>
</comment>
<comment type="subcellular location">
    <subcellularLocation>
        <location evidence="1">Cytoplasm</location>
    </subcellularLocation>
</comment>
<comment type="similarity">
    <text evidence="1">Belongs to the class-V pyridoxal-phosphate-dependent aminotransferase family. SerC subfamily.</text>
</comment>
<protein>
    <recommendedName>
        <fullName evidence="1">Phosphoserine aminotransferase</fullName>
        <ecNumber evidence="1">2.6.1.52</ecNumber>
    </recommendedName>
    <alternativeName>
        <fullName evidence="1">Phosphohydroxythreonine aminotransferase</fullName>
        <shortName evidence="1">PSAT</shortName>
    </alternativeName>
</protein>
<name>SERC_PSET1</name>
<dbReference type="EC" id="2.6.1.52" evidence="1"/>
<dbReference type="EMBL" id="CR954246">
    <property type="protein sequence ID" value="CAI86497.1"/>
    <property type="molecule type" value="Genomic_DNA"/>
</dbReference>
<dbReference type="SMR" id="Q3ILA3"/>
<dbReference type="STRING" id="326442.PSHAa1422"/>
<dbReference type="KEGG" id="pha:PSHAa1422"/>
<dbReference type="PATRIC" id="fig|326442.8.peg.1377"/>
<dbReference type="eggNOG" id="COG1932">
    <property type="taxonomic scope" value="Bacteria"/>
</dbReference>
<dbReference type="HOGENOM" id="CLU_034866_0_2_6"/>
<dbReference type="BioCyc" id="PHAL326442:PSHA_RS07000-MONOMER"/>
<dbReference type="UniPathway" id="UPA00135">
    <property type="reaction ID" value="UER00197"/>
</dbReference>
<dbReference type="UniPathway" id="UPA00244">
    <property type="reaction ID" value="UER00311"/>
</dbReference>
<dbReference type="Proteomes" id="UP000006843">
    <property type="component" value="Chromosome I"/>
</dbReference>
<dbReference type="GO" id="GO:0005737">
    <property type="term" value="C:cytoplasm"/>
    <property type="evidence" value="ECO:0007669"/>
    <property type="project" value="UniProtKB-SubCell"/>
</dbReference>
<dbReference type="GO" id="GO:0004648">
    <property type="term" value="F:O-phospho-L-serine:2-oxoglutarate aminotransferase activity"/>
    <property type="evidence" value="ECO:0007669"/>
    <property type="project" value="UniProtKB-UniRule"/>
</dbReference>
<dbReference type="GO" id="GO:0030170">
    <property type="term" value="F:pyridoxal phosphate binding"/>
    <property type="evidence" value="ECO:0007669"/>
    <property type="project" value="UniProtKB-UniRule"/>
</dbReference>
<dbReference type="GO" id="GO:0006564">
    <property type="term" value="P:L-serine biosynthetic process"/>
    <property type="evidence" value="ECO:0007669"/>
    <property type="project" value="UniProtKB-UniRule"/>
</dbReference>
<dbReference type="GO" id="GO:0008615">
    <property type="term" value="P:pyridoxine biosynthetic process"/>
    <property type="evidence" value="ECO:0007669"/>
    <property type="project" value="UniProtKB-UniRule"/>
</dbReference>
<dbReference type="FunFam" id="3.40.640.10:FF:000010">
    <property type="entry name" value="Phosphoserine aminotransferase"/>
    <property type="match status" value="1"/>
</dbReference>
<dbReference type="FunFam" id="3.90.1150.10:FF:000006">
    <property type="entry name" value="Phosphoserine aminotransferase"/>
    <property type="match status" value="1"/>
</dbReference>
<dbReference type="Gene3D" id="3.90.1150.10">
    <property type="entry name" value="Aspartate Aminotransferase, domain 1"/>
    <property type="match status" value="1"/>
</dbReference>
<dbReference type="Gene3D" id="3.40.640.10">
    <property type="entry name" value="Type I PLP-dependent aspartate aminotransferase-like (Major domain)"/>
    <property type="match status" value="1"/>
</dbReference>
<dbReference type="HAMAP" id="MF_00160">
    <property type="entry name" value="SerC_aminotrans_5"/>
    <property type="match status" value="1"/>
</dbReference>
<dbReference type="InterPro" id="IPR000192">
    <property type="entry name" value="Aminotrans_V_dom"/>
</dbReference>
<dbReference type="InterPro" id="IPR020578">
    <property type="entry name" value="Aminotrans_V_PyrdxlP_BS"/>
</dbReference>
<dbReference type="InterPro" id="IPR022278">
    <property type="entry name" value="Pser_aminoTfrase"/>
</dbReference>
<dbReference type="InterPro" id="IPR015424">
    <property type="entry name" value="PyrdxlP-dep_Trfase"/>
</dbReference>
<dbReference type="InterPro" id="IPR015421">
    <property type="entry name" value="PyrdxlP-dep_Trfase_major"/>
</dbReference>
<dbReference type="InterPro" id="IPR015422">
    <property type="entry name" value="PyrdxlP-dep_Trfase_small"/>
</dbReference>
<dbReference type="NCBIfam" id="NF003764">
    <property type="entry name" value="PRK05355.1"/>
    <property type="match status" value="1"/>
</dbReference>
<dbReference type="NCBIfam" id="TIGR01364">
    <property type="entry name" value="serC_1"/>
    <property type="match status" value="1"/>
</dbReference>
<dbReference type="PANTHER" id="PTHR43247">
    <property type="entry name" value="PHOSPHOSERINE AMINOTRANSFERASE"/>
    <property type="match status" value="1"/>
</dbReference>
<dbReference type="PANTHER" id="PTHR43247:SF1">
    <property type="entry name" value="PHOSPHOSERINE AMINOTRANSFERASE"/>
    <property type="match status" value="1"/>
</dbReference>
<dbReference type="Pfam" id="PF00266">
    <property type="entry name" value="Aminotran_5"/>
    <property type="match status" value="1"/>
</dbReference>
<dbReference type="PIRSF" id="PIRSF000525">
    <property type="entry name" value="SerC"/>
    <property type="match status" value="1"/>
</dbReference>
<dbReference type="SUPFAM" id="SSF53383">
    <property type="entry name" value="PLP-dependent transferases"/>
    <property type="match status" value="1"/>
</dbReference>
<dbReference type="PROSITE" id="PS00595">
    <property type="entry name" value="AA_TRANSFER_CLASS_5"/>
    <property type="match status" value="1"/>
</dbReference>
<proteinExistence type="inferred from homology"/>
<keyword id="KW-0028">Amino-acid biosynthesis</keyword>
<keyword id="KW-0032">Aminotransferase</keyword>
<keyword id="KW-0963">Cytoplasm</keyword>
<keyword id="KW-0663">Pyridoxal phosphate</keyword>
<keyword id="KW-0664">Pyridoxine biosynthesis</keyword>
<keyword id="KW-1185">Reference proteome</keyword>
<keyword id="KW-0718">Serine biosynthesis</keyword>
<keyword id="KW-0808">Transferase</keyword>
<organism>
    <name type="scientific">Pseudoalteromonas translucida (strain TAC 125)</name>
    <dbReference type="NCBI Taxonomy" id="326442"/>
    <lineage>
        <taxon>Bacteria</taxon>
        <taxon>Pseudomonadati</taxon>
        <taxon>Pseudomonadota</taxon>
        <taxon>Gammaproteobacteria</taxon>
        <taxon>Alteromonadales</taxon>
        <taxon>Pseudoalteromonadaceae</taxon>
        <taxon>Pseudoalteromonas</taxon>
    </lineage>
</organism>
<feature type="chain" id="PRO_1000058221" description="Phosphoserine aminotransferase">
    <location>
        <begin position="1"/>
        <end position="360"/>
    </location>
</feature>
<feature type="binding site" evidence="1">
    <location>
        <position position="41"/>
    </location>
    <ligand>
        <name>L-glutamate</name>
        <dbReference type="ChEBI" id="CHEBI:29985"/>
    </ligand>
</feature>
<feature type="binding site" evidence="1">
    <location>
        <begin position="75"/>
        <end position="76"/>
    </location>
    <ligand>
        <name>pyridoxal 5'-phosphate</name>
        <dbReference type="ChEBI" id="CHEBI:597326"/>
    </ligand>
</feature>
<feature type="binding site" evidence="1">
    <location>
        <position position="101"/>
    </location>
    <ligand>
        <name>pyridoxal 5'-phosphate</name>
        <dbReference type="ChEBI" id="CHEBI:597326"/>
    </ligand>
</feature>
<feature type="binding site" evidence="1">
    <location>
        <position position="152"/>
    </location>
    <ligand>
        <name>pyridoxal 5'-phosphate</name>
        <dbReference type="ChEBI" id="CHEBI:597326"/>
    </ligand>
</feature>
<feature type="binding site" evidence="1">
    <location>
        <position position="172"/>
    </location>
    <ligand>
        <name>pyridoxal 5'-phosphate</name>
        <dbReference type="ChEBI" id="CHEBI:597326"/>
    </ligand>
</feature>
<feature type="binding site" evidence="1">
    <location>
        <position position="195"/>
    </location>
    <ligand>
        <name>pyridoxal 5'-phosphate</name>
        <dbReference type="ChEBI" id="CHEBI:597326"/>
    </ligand>
</feature>
<feature type="binding site" evidence="1">
    <location>
        <begin position="237"/>
        <end position="238"/>
    </location>
    <ligand>
        <name>pyridoxal 5'-phosphate</name>
        <dbReference type="ChEBI" id="CHEBI:597326"/>
    </ligand>
</feature>
<feature type="modified residue" description="N6-(pyridoxal phosphate)lysine" evidence="1">
    <location>
        <position position="196"/>
    </location>
</feature>